<gene>
    <name evidence="1" type="primary">psbJ</name>
</gene>
<name>PSBJ_VITVI</name>
<comment type="function">
    <text evidence="1">One of the components of the core complex of photosystem II (PSII). PSII is a light-driven water:plastoquinone oxidoreductase that uses light energy to abstract electrons from H(2)O, generating O(2) and a proton gradient subsequently used for ATP formation. It consists of a core antenna complex that captures photons, and an electron transfer chain that converts photonic excitation into a charge separation.</text>
</comment>
<comment type="subunit">
    <text evidence="1">PSII is composed of 1 copy each of membrane proteins PsbA, PsbB, PsbC, PsbD, PsbE, PsbF, PsbH, PsbI, PsbJ, PsbK, PsbL, PsbM, PsbT, PsbX, PsbY, PsbZ, Psb30/Ycf12, at least 3 peripheral proteins of the oxygen-evolving complex and a large number of cofactors. It forms dimeric complexes.</text>
</comment>
<comment type="subcellular location">
    <subcellularLocation>
        <location evidence="1">Plastid</location>
        <location evidence="1">Chloroplast thylakoid membrane</location>
        <topology evidence="1">Single-pass membrane protein</topology>
    </subcellularLocation>
</comment>
<comment type="similarity">
    <text evidence="1">Belongs to the PsbJ family.</text>
</comment>
<reference key="1">
    <citation type="journal article" date="2006" name="BMC Evol. Biol.">
        <title>Phylogenetic analyses of Vitis (Vitaceae) based on complete chloroplast genome sequences: effects of taxon sampling and phylogenetic methods on resolving relationships among rosids.</title>
        <authorList>
            <person name="Jansen R.K."/>
            <person name="Kaittanis C."/>
            <person name="Lee S.-B."/>
            <person name="Saski C."/>
            <person name="Tomkins J."/>
            <person name="Alverson A.J."/>
            <person name="Daniell H."/>
        </authorList>
    </citation>
    <scope>NUCLEOTIDE SEQUENCE [LARGE SCALE GENOMIC DNA]</scope>
    <source>
        <strain>cv. Maxxa</strain>
    </source>
</reference>
<organism>
    <name type="scientific">Vitis vinifera</name>
    <name type="common">Grape</name>
    <dbReference type="NCBI Taxonomy" id="29760"/>
    <lineage>
        <taxon>Eukaryota</taxon>
        <taxon>Viridiplantae</taxon>
        <taxon>Streptophyta</taxon>
        <taxon>Embryophyta</taxon>
        <taxon>Tracheophyta</taxon>
        <taxon>Spermatophyta</taxon>
        <taxon>Magnoliopsida</taxon>
        <taxon>eudicotyledons</taxon>
        <taxon>Gunneridae</taxon>
        <taxon>Pentapetalae</taxon>
        <taxon>rosids</taxon>
        <taxon>Vitales</taxon>
        <taxon>Vitaceae</taxon>
        <taxon>Viteae</taxon>
        <taxon>Vitis</taxon>
    </lineage>
</organism>
<protein>
    <recommendedName>
        <fullName evidence="1">Photosystem II reaction center protein J</fullName>
        <shortName evidence="1">PSII-J</shortName>
    </recommendedName>
</protein>
<evidence type="ECO:0000255" key="1">
    <source>
        <dbReference type="HAMAP-Rule" id="MF_01305"/>
    </source>
</evidence>
<proteinExistence type="inferred from homology"/>
<keyword id="KW-0150">Chloroplast</keyword>
<keyword id="KW-0472">Membrane</keyword>
<keyword id="KW-0602">Photosynthesis</keyword>
<keyword id="KW-0604">Photosystem II</keyword>
<keyword id="KW-0934">Plastid</keyword>
<keyword id="KW-0674">Reaction center</keyword>
<keyword id="KW-1185">Reference proteome</keyword>
<keyword id="KW-0793">Thylakoid</keyword>
<keyword id="KW-0812">Transmembrane</keyword>
<keyword id="KW-1133">Transmembrane helix</keyword>
<dbReference type="EMBL" id="DQ424856">
    <property type="protein sequence ID" value="ABE47548.1"/>
    <property type="molecule type" value="Genomic_DNA"/>
</dbReference>
<dbReference type="RefSeq" id="YP_567090.1">
    <property type="nucleotide sequence ID" value="NC_007957.1"/>
</dbReference>
<dbReference type="SMR" id="Q0ZJ06"/>
<dbReference type="FunCoup" id="Q0ZJ06">
    <property type="interactions" value="46"/>
</dbReference>
<dbReference type="STRING" id="29760.Q0ZJ06"/>
<dbReference type="PaxDb" id="29760-VIT_00s0332g00110.t01"/>
<dbReference type="GeneID" id="4025051"/>
<dbReference type="KEGG" id="vvi:4025051"/>
<dbReference type="eggNOG" id="ENOG502SBI8">
    <property type="taxonomic scope" value="Eukaryota"/>
</dbReference>
<dbReference type="InParanoid" id="Q0ZJ06"/>
<dbReference type="Proteomes" id="UP000009183">
    <property type="component" value="Chloroplast"/>
</dbReference>
<dbReference type="GO" id="GO:0009535">
    <property type="term" value="C:chloroplast thylakoid membrane"/>
    <property type="evidence" value="ECO:0007669"/>
    <property type="project" value="UniProtKB-SubCell"/>
</dbReference>
<dbReference type="GO" id="GO:0009523">
    <property type="term" value="C:photosystem II"/>
    <property type="evidence" value="ECO:0000318"/>
    <property type="project" value="GO_Central"/>
</dbReference>
<dbReference type="GO" id="GO:0009539">
    <property type="term" value="C:photosystem II reaction center"/>
    <property type="evidence" value="ECO:0007669"/>
    <property type="project" value="InterPro"/>
</dbReference>
<dbReference type="GO" id="GO:0015979">
    <property type="term" value="P:photosynthesis"/>
    <property type="evidence" value="ECO:0007669"/>
    <property type="project" value="UniProtKB-UniRule"/>
</dbReference>
<dbReference type="Gene3D" id="6.10.250.2070">
    <property type="match status" value="1"/>
</dbReference>
<dbReference type="HAMAP" id="MF_01305">
    <property type="entry name" value="PSII_PsbJ"/>
    <property type="match status" value="1"/>
</dbReference>
<dbReference type="InterPro" id="IPR002682">
    <property type="entry name" value="PSII_PsbJ"/>
</dbReference>
<dbReference type="InterPro" id="IPR037267">
    <property type="entry name" value="PSII_PsbJ_sf"/>
</dbReference>
<dbReference type="NCBIfam" id="NF002722">
    <property type="entry name" value="PRK02565.1"/>
    <property type="match status" value="1"/>
</dbReference>
<dbReference type="PANTHER" id="PTHR34812">
    <property type="entry name" value="PHOTOSYSTEM II REACTION CENTER PROTEIN J"/>
    <property type="match status" value="1"/>
</dbReference>
<dbReference type="PANTHER" id="PTHR34812:SF3">
    <property type="entry name" value="PHOTOSYSTEM II REACTION CENTER PROTEIN J"/>
    <property type="match status" value="1"/>
</dbReference>
<dbReference type="Pfam" id="PF01788">
    <property type="entry name" value="PsbJ"/>
    <property type="match status" value="1"/>
</dbReference>
<dbReference type="SUPFAM" id="SSF161021">
    <property type="entry name" value="Photosystem II reaction center protein J, PsbJ"/>
    <property type="match status" value="1"/>
</dbReference>
<geneLocation type="chloroplast"/>
<feature type="chain" id="PRO_0000276119" description="Photosystem II reaction center protein J">
    <location>
        <begin position="1"/>
        <end position="40"/>
    </location>
</feature>
<feature type="transmembrane region" description="Helical" evidence="1">
    <location>
        <begin position="8"/>
        <end position="28"/>
    </location>
</feature>
<sequence length="40" mass="4145">MADTTGRIPLWLIGTVTGIPVIGLIGIFFYGSYSGLGSSL</sequence>
<accession>Q0ZJ06</accession>